<evidence type="ECO:0000255" key="1">
    <source>
        <dbReference type="HAMAP-Rule" id="MF_00321"/>
    </source>
</evidence>
<reference key="1">
    <citation type="journal article" date="2011" name="PLoS Genet.">
        <title>The evolution of host specialization in the vertebrate gut symbiont Lactobacillus reuteri.</title>
        <authorList>
            <person name="Frese S.A."/>
            <person name="Benson A.K."/>
            <person name="Tannock G.W."/>
            <person name="Loach D.M."/>
            <person name="Kim J."/>
            <person name="Zhang M."/>
            <person name="Oh P.L."/>
            <person name="Heng N.C."/>
            <person name="Patil P.B."/>
            <person name="Juge N."/>
            <person name="Mackenzie D.A."/>
            <person name="Pearson B.M."/>
            <person name="Lapidus A."/>
            <person name="Dalin E."/>
            <person name="Tice H."/>
            <person name="Goltsman E."/>
            <person name="Land M."/>
            <person name="Hauser L."/>
            <person name="Ivanova N."/>
            <person name="Kyrpides N.C."/>
            <person name="Walter J."/>
        </authorList>
    </citation>
    <scope>NUCLEOTIDE SEQUENCE [LARGE SCALE GENOMIC DNA]</scope>
    <source>
        <strain>DSM 20016</strain>
    </source>
</reference>
<sequence>MEVHNVDLTISAVSDEQYPKTNIPEIALVGRSNVGKSSLTNVLINRRNFAHTSSQPGKTQTLNFYDVEDKVYFVDVPGYGYAKVSKKERERFGKMIEQYLTQREQLRGVIQLVDARHEPTPDDVNMYNWLQYYNIPTLIVGTKIDKVKRSAWNRQLSLIKKTLDVESSTPIILFSATEKKGKDDVWQWIEERMGKN</sequence>
<feature type="chain" id="PRO_1000059473" description="Probable GTP-binding protein EngB">
    <location>
        <begin position="1"/>
        <end position="196"/>
    </location>
</feature>
<feature type="domain" description="EngB-type G" evidence="1">
    <location>
        <begin position="22"/>
        <end position="195"/>
    </location>
</feature>
<feature type="binding site" evidence="1">
    <location>
        <begin position="30"/>
        <end position="37"/>
    </location>
    <ligand>
        <name>GTP</name>
        <dbReference type="ChEBI" id="CHEBI:37565"/>
    </ligand>
</feature>
<feature type="binding site" evidence="1">
    <location>
        <position position="37"/>
    </location>
    <ligand>
        <name>Mg(2+)</name>
        <dbReference type="ChEBI" id="CHEBI:18420"/>
    </ligand>
</feature>
<feature type="binding site" evidence="1">
    <location>
        <begin position="57"/>
        <end position="61"/>
    </location>
    <ligand>
        <name>GTP</name>
        <dbReference type="ChEBI" id="CHEBI:37565"/>
    </ligand>
</feature>
<feature type="binding site" evidence="1">
    <location>
        <position position="59"/>
    </location>
    <ligand>
        <name>Mg(2+)</name>
        <dbReference type="ChEBI" id="CHEBI:18420"/>
    </ligand>
</feature>
<feature type="binding site" evidence="1">
    <location>
        <begin position="75"/>
        <end position="78"/>
    </location>
    <ligand>
        <name>GTP</name>
        <dbReference type="ChEBI" id="CHEBI:37565"/>
    </ligand>
</feature>
<feature type="binding site" evidence="1">
    <location>
        <begin position="142"/>
        <end position="145"/>
    </location>
    <ligand>
        <name>GTP</name>
        <dbReference type="ChEBI" id="CHEBI:37565"/>
    </ligand>
</feature>
<feature type="binding site" evidence="1">
    <location>
        <begin position="174"/>
        <end position="176"/>
    </location>
    <ligand>
        <name>GTP</name>
        <dbReference type="ChEBI" id="CHEBI:37565"/>
    </ligand>
</feature>
<proteinExistence type="inferred from homology"/>
<organism>
    <name type="scientific">Limosilactobacillus reuteri (strain DSM 20016)</name>
    <name type="common">Lactobacillus reuteri</name>
    <dbReference type="NCBI Taxonomy" id="557436"/>
    <lineage>
        <taxon>Bacteria</taxon>
        <taxon>Bacillati</taxon>
        <taxon>Bacillota</taxon>
        <taxon>Bacilli</taxon>
        <taxon>Lactobacillales</taxon>
        <taxon>Lactobacillaceae</taxon>
        <taxon>Limosilactobacillus</taxon>
    </lineage>
</organism>
<comment type="function">
    <text evidence="1">Necessary for normal cell division and for the maintenance of normal septation.</text>
</comment>
<comment type="cofactor">
    <cofactor evidence="1">
        <name>Mg(2+)</name>
        <dbReference type="ChEBI" id="CHEBI:18420"/>
    </cofactor>
</comment>
<comment type="similarity">
    <text evidence="1">Belongs to the TRAFAC class TrmE-Era-EngA-EngB-Septin-like GTPase superfamily. EngB GTPase family.</text>
</comment>
<name>ENGB_LIMRD</name>
<gene>
    <name evidence="1" type="primary">engB</name>
    <name type="ordered locus">Lreu_0654</name>
</gene>
<protein>
    <recommendedName>
        <fullName evidence="1">Probable GTP-binding protein EngB</fullName>
    </recommendedName>
</protein>
<keyword id="KW-0131">Cell cycle</keyword>
<keyword id="KW-0132">Cell division</keyword>
<keyword id="KW-0342">GTP-binding</keyword>
<keyword id="KW-0460">Magnesium</keyword>
<keyword id="KW-0479">Metal-binding</keyword>
<keyword id="KW-0547">Nucleotide-binding</keyword>
<keyword id="KW-1185">Reference proteome</keyword>
<keyword id="KW-0717">Septation</keyword>
<accession>A5VJ95</accession>
<dbReference type="EMBL" id="CP000705">
    <property type="protein sequence ID" value="ABQ82919.1"/>
    <property type="molecule type" value="Genomic_DNA"/>
</dbReference>
<dbReference type="SMR" id="A5VJ95"/>
<dbReference type="STRING" id="557436.Lreu_0654"/>
<dbReference type="KEGG" id="lre:Lreu_0654"/>
<dbReference type="PATRIC" id="fig|557436.17.peg.726"/>
<dbReference type="eggNOG" id="COG0218">
    <property type="taxonomic scope" value="Bacteria"/>
</dbReference>
<dbReference type="HOGENOM" id="CLU_033732_3_0_9"/>
<dbReference type="Proteomes" id="UP000001991">
    <property type="component" value="Chromosome"/>
</dbReference>
<dbReference type="GO" id="GO:0005829">
    <property type="term" value="C:cytosol"/>
    <property type="evidence" value="ECO:0007669"/>
    <property type="project" value="TreeGrafter"/>
</dbReference>
<dbReference type="GO" id="GO:0005525">
    <property type="term" value="F:GTP binding"/>
    <property type="evidence" value="ECO:0007669"/>
    <property type="project" value="UniProtKB-UniRule"/>
</dbReference>
<dbReference type="GO" id="GO:0046872">
    <property type="term" value="F:metal ion binding"/>
    <property type="evidence" value="ECO:0007669"/>
    <property type="project" value="UniProtKB-KW"/>
</dbReference>
<dbReference type="GO" id="GO:0000917">
    <property type="term" value="P:division septum assembly"/>
    <property type="evidence" value="ECO:0007669"/>
    <property type="project" value="UniProtKB-KW"/>
</dbReference>
<dbReference type="CDD" id="cd01876">
    <property type="entry name" value="YihA_EngB"/>
    <property type="match status" value="1"/>
</dbReference>
<dbReference type="FunFam" id="3.40.50.300:FF:000098">
    <property type="entry name" value="Probable GTP-binding protein EngB"/>
    <property type="match status" value="1"/>
</dbReference>
<dbReference type="Gene3D" id="3.40.50.300">
    <property type="entry name" value="P-loop containing nucleotide triphosphate hydrolases"/>
    <property type="match status" value="1"/>
</dbReference>
<dbReference type="HAMAP" id="MF_00321">
    <property type="entry name" value="GTPase_EngB"/>
    <property type="match status" value="1"/>
</dbReference>
<dbReference type="InterPro" id="IPR030393">
    <property type="entry name" value="G_ENGB_dom"/>
</dbReference>
<dbReference type="InterPro" id="IPR006073">
    <property type="entry name" value="GTP-bd"/>
</dbReference>
<dbReference type="InterPro" id="IPR019987">
    <property type="entry name" value="GTP-bd_ribosome_bio_YsxC"/>
</dbReference>
<dbReference type="InterPro" id="IPR027417">
    <property type="entry name" value="P-loop_NTPase"/>
</dbReference>
<dbReference type="InterPro" id="IPR005225">
    <property type="entry name" value="Small_GTP-bd"/>
</dbReference>
<dbReference type="NCBIfam" id="TIGR03598">
    <property type="entry name" value="GTPase_YsxC"/>
    <property type="match status" value="1"/>
</dbReference>
<dbReference type="NCBIfam" id="TIGR00231">
    <property type="entry name" value="small_GTP"/>
    <property type="match status" value="1"/>
</dbReference>
<dbReference type="PANTHER" id="PTHR11649:SF13">
    <property type="entry name" value="ENGB-TYPE G DOMAIN-CONTAINING PROTEIN"/>
    <property type="match status" value="1"/>
</dbReference>
<dbReference type="PANTHER" id="PTHR11649">
    <property type="entry name" value="MSS1/TRME-RELATED GTP-BINDING PROTEIN"/>
    <property type="match status" value="1"/>
</dbReference>
<dbReference type="Pfam" id="PF01926">
    <property type="entry name" value="MMR_HSR1"/>
    <property type="match status" value="1"/>
</dbReference>
<dbReference type="SUPFAM" id="SSF52540">
    <property type="entry name" value="P-loop containing nucleoside triphosphate hydrolases"/>
    <property type="match status" value="1"/>
</dbReference>
<dbReference type="PROSITE" id="PS51706">
    <property type="entry name" value="G_ENGB"/>
    <property type="match status" value="1"/>
</dbReference>